<keyword id="KW-0963">Cytoplasm</keyword>
<keyword id="KW-0489">Methyltransferase</keyword>
<keyword id="KW-1185">Reference proteome</keyword>
<keyword id="KW-0949">S-adenosyl-L-methionine</keyword>
<keyword id="KW-0808">Transferase</keyword>
<keyword id="KW-0819">tRNA processing</keyword>
<name>TRMD_SHEON</name>
<gene>
    <name evidence="1" type="primary">trmD</name>
    <name type="ordered locus">SO_1359</name>
</gene>
<accession>Q8CX44</accession>
<comment type="function">
    <text evidence="1">Specifically methylates guanosine-37 in various tRNAs.</text>
</comment>
<comment type="catalytic activity">
    <reaction evidence="1">
        <text>guanosine(37) in tRNA + S-adenosyl-L-methionine = N(1)-methylguanosine(37) in tRNA + S-adenosyl-L-homocysteine + H(+)</text>
        <dbReference type="Rhea" id="RHEA:36899"/>
        <dbReference type="Rhea" id="RHEA-COMP:10145"/>
        <dbReference type="Rhea" id="RHEA-COMP:10147"/>
        <dbReference type="ChEBI" id="CHEBI:15378"/>
        <dbReference type="ChEBI" id="CHEBI:57856"/>
        <dbReference type="ChEBI" id="CHEBI:59789"/>
        <dbReference type="ChEBI" id="CHEBI:73542"/>
        <dbReference type="ChEBI" id="CHEBI:74269"/>
        <dbReference type="EC" id="2.1.1.228"/>
    </reaction>
</comment>
<comment type="subunit">
    <text evidence="1">Homodimer.</text>
</comment>
<comment type="subcellular location">
    <subcellularLocation>
        <location evidence="1">Cytoplasm</location>
    </subcellularLocation>
</comment>
<comment type="similarity">
    <text evidence="1">Belongs to the RNA methyltransferase TrmD family.</text>
</comment>
<dbReference type="EC" id="2.1.1.228" evidence="1"/>
<dbReference type="EMBL" id="AE014299">
    <property type="protein sequence ID" value="AAN54424.1"/>
    <property type="molecule type" value="Genomic_DNA"/>
</dbReference>
<dbReference type="RefSeq" id="NP_716979.1">
    <property type="nucleotide sequence ID" value="NC_004347.2"/>
</dbReference>
<dbReference type="RefSeq" id="WP_011071568.1">
    <property type="nucleotide sequence ID" value="NC_004347.2"/>
</dbReference>
<dbReference type="SMR" id="Q8CX44"/>
<dbReference type="STRING" id="211586.SO_1359"/>
<dbReference type="PaxDb" id="211586-SO_1359"/>
<dbReference type="KEGG" id="son:SO_1359"/>
<dbReference type="PATRIC" id="fig|211586.12.peg.1308"/>
<dbReference type="eggNOG" id="COG0336">
    <property type="taxonomic scope" value="Bacteria"/>
</dbReference>
<dbReference type="HOGENOM" id="CLU_047363_0_1_6"/>
<dbReference type="OrthoDB" id="9807416at2"/>
<dbReference type="PhylomeDB" id="Q8CX44"/>
<dbReference type="BioCyc" id="SONE211586:G1GMP-1257-MONOMER"/>
<dbReference type="Proteomes" id="UP000008186">
    <property type="component" value="Chromosome"/>
</dbReference>
<dbReference type="GO" id="GO:0005829">
    <property type="term" value="C:cytosol"/>
    <property type="evidence" value="ECO:0000318"/>
    <property type="project" value="GO_Central"/>
</dbReference>
<dbReference type="GO" id="GO:0052906">
    <property type="term" value="F:tRNA (guanine(37)-N1)-methyltransferase activity"/>
    <property type="evidence" value="ECO:0000318"/>
    <property type="project" value="GO_Central"/>
</dbReference>
<dbReference type="GO" id="GO:0002939">
    <property type="term" value="P:tRNA N1-guanine methylation"/>
    <property type="evidence" value="ECO:0000318"/>
    <property type="project" value="GO_Central"/>
</dbReference>
<dbReference type="CDD" id="cd18080">
    <property type="entry name" value="TrmD-like"/>
    <property type="match status" value="1"/>
</dbReference>
<dbReference type="FunFam" id="1.10.1270.20:FF:000001">
    <property type="entry name" value="tRNA (guanine-N(1)-)-methyltransferase"/>
    <property type="match status" value="1"/>
</dbReference>
<dbReference type="FunFam" id="3.40.1280.10:FF:000001">
    <property type="entry name" value="tRNA (guanine-N(1)-)-methyltransferase"/>
    <property type="match status" value="1"/>
</dbReference>
<dbReference type="Gene3D" id="3.40.1280.10">
    <property type="match status" value="1"/>
</dbReference>
<dbReference type="Gene3D" id="1.10.1270.20">
    <property type="entry name" value="tRNA(m1g37)methyltransferase, domain 2"/>
    <property type="match status" value="1"/>
</dbReference>
<dbReference type="HAMAP" id="MF_00605">
    <property type="entry name" value="TrmD"/>
    <property type="match status" value="1"/>
</dbReference>
<dbReference type="InterPro" id="IPR029028">
    <property type="entry name" value="Alpha/beta_knot_MTases"/>
</dbReference>
<dbReference type="InterPro" id="IPR023148">
    <property type="entry name" value="tRNA_m1G_MeTrfase_C_sf"/>
</dbReference>
<dbReference type="InterPro" id="IPR002649">
    <property type="entry name" value="tRNA_m1G_MeTrfase_TrmD"/>
</dbReference>
<dbReference type="InterPro" id="IPR029026">
    <property type="entry name" value="tRNA_m1G_MTases_N"/>
</dbReference>
<dbReference type="InterPro" id="IPR016009">
    <property type="entry name" value="tRNA_MeTrfase_TRMD/TRM10"/>
</dbReference>
<dbReference type="NCBIfam" id="NF000648">
    <property type="entry name" value="PRK00026.1"/>
    <property type="match status" value="1"/>
</dbReference>
<dbReference type="NCBIfam" id="TIGR00088">
    <property type="entry name" value="trmD"/>
    <property type="match status" value="1"/>
</dbReference>
<dbReference type="PANTHER" id="PTHR46417">
    <property type="entry name" value="TRNA (GUANINE-N(1)-)-METHYLTRANSFERASE"/>
    <property type="match status" value="1"/>
</dbReference>
<dbReference type="PANTHER" id="PTHR46417:SF1">
    <property type="entry name" value="TRNA (GUANINE-N(1)-)-METHYLTRANSFERASE"/>
    <property type="match status" value="1"/>
</dbReference>
<dbReference type="Pfam" id="PF01746">
    <property type="entry name" value="tRNA_m1G_MT"/>
    <property type="match status" value="1"/>
</dbReference>
<dbReference type="PIRSF" id="PIRSF000386">
    <property type="entry name" value="tRNA_mtase"/>
    <property type="match status" value="1"/>
</dbReference>
<dbReference type="SUPFAM" id="SSF75217">
    <property type="entry name" value="alpha/beta knot"/>
    <property type="match status" value="1"/>
</dbReference>
<protein>
    <recommendedName>
        <fullName evidence="1">tRNA (guanine-N(1)-)-methyltransferase</fullName>
        <ecNumber evidence="1">2.1.1.228</ecNumber>
    </recommendedName>
    <alternativeName>
        <fullName evidence="1">M1G-methyltransferase</fullName>
    </alternativeName>
    <alternativeName>
        <fullName evidence="1">tRNA [GM37] methyltransferase</fullName>
    </alternativeName>
</protein>
<proteinExistence type="inferred from homology"/>
<reference key="1">
    <citation type="journal article" date="2002" name="Nat. Biotechnol.">
        <title>Genome sequence of the dissimilatory metal ion-reducing bacterium Shewanella oneidensis.</title>
        <authorList>
            <person name="Heidelberg J.F."/>
            <person name="Paulsen I.T."/>
            <person name="Nelson K.E."/>
            <person name="Gaidos E.J."/>
            <person name="Nelson W.C."/>
            <person name="Read T.D."/>
            <person name="Eisen J.A."/>
            <person name="Seshadri R."/>
            <person name="Ward N.L."/>
            <person name="Methe B.A."/>
            <person name="Clayton R.A."/>
            <person name="Meyer T."/>
            <person name="Tsapin A."/>
            <person name="Scott J."/>
            <person name="Beanan M.J."/>
            <person name="Brinkac L.M."/>
            <person name="Daugherty S.C."/>
            <person name="DeBoy R.T."/>
            <person name="Dodson R.J."/>
            <person name="Durkin A.S."/>
            <person name="Haft D.H."/>
            <person name="Kolonay J.F."/>
            <person name="Madupu R."/>
            <person name="Peterson J.D."/>
            <person name="Umayam L.A."/>
            <person name="White O."/>
            <person name="Wolf A.M."/>
            <person name="Vamathevan J.J."/>
            <person name="Weidman J.F."/>
            <person name="Impraim M."/>
            <person name="Lee K."/>
            <person name="Berry K.J."/>
            <person name="Lee C."/>
            <person name="Mueller J."/>
            <person name="Khouri H.M."/>
            <person name="Gill J."/>
            <person name="Utterback T.R."/>
            <person name="McDonald L.A."/>
            <person name="Feldblyum T.V."/>
            <person name="Smith H.O."/>
            <person name="Venter J.C."/>
            <person name="Nealson K.H."/>
            <person name="Fraser C.M."/>
        </authorList>
    </citation>
    <scope>NUCLEOTIDE SEQUENCE [LARGE SCALE GENOMIC DNA]</scope>
    <source>
        <strain>ATCC 700550 / JCM 31522 / CIP 106686 / LMG 19005 / NCIMB 14063 / MR-1</strain>
    </source>
</reference>
<sequence length="248" mass="27451">MWLGVITLFPEMFRAVTDFGVTGRAVKNGLLELHTWNPRDFTHDRHSTVDDRPYGGGPGMLMMVQPLRDAIHAARAAAGEDAKVIYLSPQGRKLDQQGVTELAKSSRLILVCGRYEGIDERIIQTEVDEEWSVGDYVLSGGELPAMTMIDAVSRLVPGVLGKQASAEQDSFSDGLLDCPHYTRPESLDGLDVPAVLLSGNHEQIRLWRLQQSLGRTLLRRPELLQNLALTDEQSTLLAQFVEAMDKNA</sequence>
<feature type="chain" id="PRO_0000060452" description="tRNA (guanine-N(1)-)-methyltransferase">
    <location>
        <begin position="1"/>
        <end position="248"/>
    </location>
</feature>
<feature type="binding site" evidence="1">
    <location>
        <position position="113"/>
    </location>
    <ligand>
        <name>S-adenosyl-L-methionine</name>
        <dbReference type="ChEBI" id="CHEBI:59789"/>
    </ligand>
</feature>
<feature type="binding site" evidence="1">
    <location>
        <begin position="133"/>
        <end position="138"/>
    </location>
    <ligand>
        <name>S-adenosyl-L-methionine</name>
        <dbReference type="ChEBI" id="CHEBI:59789"/>
    </ligand>
</feature>
<organism>
    <name type="scientific">Shewanella oneidensis (strain ATCC 700550 / JCM 31522 / CIP 106686 / LMG 19005 / NCIMB 14063 / MR-1)</name>
    <dbReference type="NCBI Taxonomy" id="211586"/>
    <lineage>
        <taxon>Bacteria</taxon>
        <taxon>Pseudomonadati</taxon>
        <taxon>Pseudomonadota</taxon>
        <taxon>Gammaproteobacteria</taxon>
        <taxon>Alteromonadales</taxon>
        <taxon>Shewanellaceae</taxon>
        <taxon>Shewanella</taxon>
    </lineage>
</organism>
<evidence type="ECO:0000255" key="1">
    <source>
        <dbReference type="HAMAP-Rule" id="MF_00605"/>
    </source>
</evidence>